<organism>
    <name type="scientific">Shewanella sp. (strain MR-4)</name>
    <dbReference type="NCBI Taxonomy" id="60480"/>
    <lineage>
        <taxon>Bacteria</taxon>
        <taxon>Pseudomonadati</taxon>
        <taxon>Pseudomonadota</taxon>
        <taxon>Gammaproteobacteria</taxon>
        <taxon>Alteromonadales</taxon>
        <taxon>Shewanellaceae</taxon>
        <taxon>Shewanella</taxon>
    </lineage>
</organism>
<gene>
    <name evidence="1" type="primary">rplM</name>
    <name type="ordered locus">Shewmr4_3269</name>
</gene>
<evidence type="ECO:0000255" key="1">
    <source>
        <dbReference type="HAMAP-Rule" id="MF_01366"/>
    </source>
</evidence>
<evidence type="ECO:0000305" key="2"/>
<protein>
    <recommendedName>
        <fullName evidence="1">Large ribosomal subunit protein uL13</fullName>
    </recommendedName>
    <alternativeName>
        <fullName evidence="2">50S ribosomal protein L13</fullName>
    </alternativeName>
</protein>
<proteinExistence type="inferred from homology"/>
<reference key="1">
    <citation type="submission" date="2006-08" db="EMBL/GenBank/DDBJ databases">
        <title>Complete sequence of Shewanella sp. MR-4.</title>
        <authorList>
            <consortium name="US DOE Joint Genome Institute"/>
            <person name="Copeland A."/>
            <person name="Lucas S."/>
            <person name="Lapidus A."/>
            <person name="Barry K."/>
            <person name="Detter J.C."/>
            <person name="Glavina del Rio T."/>
            <person name="Hammon N."/>
            <person name="Israni S."/>
            <person name="Dalin E."/>
            <person name="Tice H."/>
            <person name="Pitluck S."/>
            <person name="Kiss H."/>
            <person name="Brettin T."/>
            <person name="Bruce D."/>
            <person name="Han C."/>
            <person name="Tapia R."/>
            <person name="Gilna P."/>
            <person name="Schmutz J."/>
            <person name="Larimer F."/>
            <person name="Land M."/>
            <person name="Hauser L."/>
            <person name="Kyrpides N."/>
            <person name="Mikhailova N."/>
            <person name="Nealson K."/>
            <person name="Konstantinidis K."/>
            <person name="Klappenbach J."/>
            <person name="Tiedje J."/>
            <person name="Richardson P."/>
        </authorList>
    </citation>
    <scope>NUCLEOTIDE SEQUENCE [LARGE SCALE GENOMIC DNA]</scope>
    <source>
        <strain>MR-4</strain>
    </source>
</reference>
<feature type="chain" id="PRO_0000261796" description="Large ribosomal subunit protein uL13">
    <location>
        <begin position="1"/>
        <end position="142"/>
    </location>
</feature>
<name>RL13_SHESM</name>
<dbReference type="EMBL" id="CP000446">
    <property type="protein sequence ID" value="ABI40337.1"/>
    <property type="molecule type" value="Genomic_DNA"/>
</dbReference>
<dbReference type="RefSeq" id="WP_011073682.1">
    <property type="nucleotide sequence ID" value="NC_008321.1"/>
</dbReference>
<dbReference type="SMR" id="Q0HF30"/>
<dbReference type="GeneID" id="94726682"/>
<dbReference type="KEGG" id="she:Shewmr4_3269"/>
<dbReference type="HOGENOM" id="CLU_082184_2_2_6"/>
<dbReference type="GO" id="GO:0022625">
    <property type="term" value="C:cytosolic large ribosomal subunit"/>
    <property type="evidence" value="ECO:0007669"/>
    <property type="project" value="TreeGrafter"/>
</dbReference>
<dbReference type="GO" id="GO:0003729">
    <property type="term" value="F:mRNA binding"/>
    <property type="evidence" value="ECO:0007669"/>
    <property type="project" value="TreeGrafter"/>
</dbReference>
<dbReference type="GO" id="GO:0003735">
    <property type="term" value="F:structural constituent of ribosome"/>
    <property type="evidence" value="ECO:0007669"/>
    <property type="project" value="InterPro"/>
</dbReference>
<dbReference type="GO" id="GO:0017148">
    <property type="term" value="P:negative regulation of translation"/>
    <property type="evidence" value="ECO:0007669"/>
    <property type="project" value="TreeGrafter"/>
</dbReference>
<dbReference type="GO" id="GO:0006412">
    <property type="term" value="P:translation"/>
    <property type="evidence" value="ECO:0007669"/>
    <property type="project" value="UniProtKB-UniRule"/>
</dbReference>
<dbReference type="CDD" id="cd00392">
    <property type="entry name" value="Ribosomal_L13"/>
    <property type="match status" value="1"/>
</dbReference>
<dbReference type="FunFam" id="3.90.1180.10:FF:000001">
    <property type="entry name" value="50S ribosomal protein L13"/>
    <property type="match status" value="1"/>
</dbReference>
<dbReference type="Gene3D" id="3.90.1180.10">
    <property type="entry name" value="Ribosomal protein L13"/>
    <property type="match status" value="1"/>
</dbReference>
<dbReference type="HAMAP" id="MF_01366">
    <property type="entry name" value="Ribosomal_uL13"/>
    <property type="match status" value="1"/>
</dbReference>
<dbReference type="InterPro" id="IPR005822">
    <property type="entry name" value="Ribosomal_uL13"/>
</dbReference>
<dbReference type="InterPro" id="IPR005823">
    <property type="entry name" value="Ribosomal_uL13_bac-type"/>
</dbReference>
<dbReference type="InterPro" id="IPR023563">
    <property type="entry name" value="Ribosomal_uL13_CS"/>
</dbReference>
<dbReference type="InterPro" id="IPR036899">
    <property type="entry name" value="Ribosomal_uL13_sf"/>
</dbReference>
<dbReference type="NCBIfam" id="TIGR01066">
    <property type="entry name" value="rplM_bact"/>
    <property type="match status" value="1"/>
</dbReference>
<dbReference type="PANTHER" id="PTHR11545:SF2">
    <property type="entry name" value="LARGE RIBOSOMAL SUBUNIT PROTEIN UL13M"/>
    <property type="match status" value="1"/>
</dbReference>
<dbReference type="PANTHER" id="PTHR11545">
    <property type="entry name" value="RIBOSOMAL PROTEIN L13"/>
    <property type="match status" value="1"/>
</dbReference>
<dbReference type="Pfam" id="PF00572">
    <property type="entry name" value="Ribosomal_L13"/>
    <property type="match status" value="1"/>
</dbReference>
<dbReference type="PIRSF" id="PIRSF002181">
    <property type="entry name" value="Ribosomal_L13"/>
    <property type="match status" value="1"/>
</dbReference>
<dbReference type="SUPFAM" id="SSF52161">
    <property type="entry name" value="Ribosomal protein L13"/>
    <property type="match status" value="1"/>
</dbReference>
<dbReference type="PROSITE" id="PS00783">
    <property type="entry name" value="RIBOSOMAL_L13"/>
    <property type="match status" value="1"/>
</dbReference>
<accession>Q0HF30</accession>
<keyword id="KW-0687">Ribonucleoprotein</keyword>
<keyword id="KW-0689">Ribosomal protein</keyword>
<sequence>MKTFTATPETVTRDWFVVDADGKTLGRIATEIALRLRGKHKPEYTPHVDTGDYIIVINAEKVTVTGNKAQGKTYYSHSGFPGGIKQISFEKLQAHKPEMIIEKAVKGMLPKGPLGRAMFRKLKVYAGAEHNHAAQQPQVLDI</sequence>
<comment type="function">
    <text evidence="1">This protein is one of the early assembly proteins of the 50S ribosomal subunit, although it is not seen to bind rRNA by itself. It is important during the early stages of 50S assembly.</text>
</comment>
<comment type="subunit">
    <text evidence="1">Part of the 50S ribosomal subunit.</text>
</comment>
<comment type="similarity">
    <text evidence="1">Belongs to the universal ribosomal protein uL13 family.</text>
</comment>